<protein>
    <recommendedName>
        <fullName evidence="1">ATP phosphoribosyltransferase</fullName>
        <shortName evidence="1">ATP-PRT</shortName>
        <shortName evidence="1">ATP-PRTase</shortName>
        <ecNumber evidence="1">2.4.2.17</ecNumber>
    </recommendedName>
</protein>
<feature type="chain" id="PRO_1000004442" description="ATP phosphoribosyltransferase">
    <location>
        <begin position="1"/>
        <end position="283"/>
    </location>
</feature>
<organism>
    <name type="scientific">Bacteroides fragilis (strain ATCC 25285 / DSM 2151 / CCUG 4856 / JCM 11019 / LMG 10263 / NCTC 9343 / Onslow / VPI 2553 / EN-2)</name>
    <dbReference type="NCBI Taxonomy" id="272559"/>
    <lineage>
        <taxon>Bacteria</taxon>
        <taxon>Pseudomonadati</taxon>
        <taxon>Bacteroidota</taxon>
        <taxon>Bacteroidia</taxon>
        <taxon>Bacteroidales</taxon>
        <taxon>Bacteroidaceae</taxon>
        <taxon>Bacteroides</taxon>
    </lineage>
</organism>
<keyword id="KW-0028">Amino-acid biosynthesis</keyword>
<keyword id="KW-0067">ATP-binding</keyword>
<keyword id="KW-0963">Cytoplasm</keyword>
<keyword id="KW-0328">Glycosyltransferase</keyword>
<keyword id="KW-0368">Histidine biosynthesis</keyword>
<keyword id="KW-0460">Magnesium</keyword>
<keyword id="KW-0479">Metal-binding</keyword>
<keyword id="KW-0547">Nucleotide-binding</keyword>
<keyword id="KW-0808">Transferase</keyword>
<evidence type="ECO:0000255" key="1">
    <source>
        <dbReference type="HAMAP-Rule" id="MF_00079"/>
    </source>
</evidence>
<proteinExistence type="inferred from homology"/>
<dbReference type="EC" id="2.4.2.17" evidence="1"/>
<dbReference type="EMBL" id="CR626927">
    <property type="protein sequence ID" value="CAH08725.1"/>
    <property type="molecule type" value="Genomic_DNA"/>
</dbReference>
<dbReference type="RefSeq" id="WP_005789131.1">
    <property type="nucleotide sequence ID" value="NZ_UFTH01000001.1"/>
</dbReference>
<dbReference type="SMR" id="Q5LAZ7"/>
<dbReference type="PaxDb" id="272559-BF9343_2944"/>
<dbReference type="GeneID" id="60369483"/>
<dbReference type="KEGG" id="bfs:BF9343_2944"/>
<dbReference type="eggNOG" id="COG0040">
    <property type="taxonomic scope" value="Bacteria"/>
</dbReference>
<dbReference type="HOGENOM" id="CLU_038115_1_0_10"/>
<dbReference type="UniPathway" id="UPA00031">
    <property type="reaction ID" value="UER00006"/>
</dbReference>
<dbReference type="Proteomes" id="UP000006731">
    <property type="component" value="Chromosome"/>
</dbReference>
<dbReference type="GO" id="GO:0005737">
    <property type="term" value="C:cytoplasm"/>
    <property type="evidence" value="ECO:0007669"/>
    <property type="project" value="UniProtKB-SubCell"/>
</dbReference>
<dbReference type="GO" id="GO:0005524">
    <property type="term" value="F:ATP binding"/>
    <property type="evidence" value="ECO:0007669"/>
    <property type="project" value="UniProtKB-KW"/>
</dbReference>
<dbReference type="GO" id="GO:0003879">
    <property type="term" value="F:ATP phosphoribosyltransferase activity"/>
    <property type="evidence" value="ECO:0007669"/>
    <property type="project" value="UniProtKB-UniRule"/>
</dbReference>
<dbReference type="GO" id="GO:0000287">
    <property type="term" value="F:magnesium ion binding"/>
    <property type="evidence" value="ECO:0007669"/>
    <property type="project" value="UniProtKB-UniRule"/>
</dbReference>
<dbReference type="GO" id="GO:0000105">
    <property type="term" value="P:L-histidine biosynthetic process"/>
    <property type="evidence" value="ECO:0007669"/>
    <property type="project" value="UniProtKB-UniRule"/>
</dbReference>
<dbReference type="CDD" id="cd13592">
    <property type="entry name" value="PBP2_HisGL2"/>
    <property type="match status" value="1"/>
</dbReference>
<dbReference type="FunFam" id="3.30.70.120:FF:000002">
    <property type="entry name" value="ATP phosphoribosyltransferase"/>
    <property type="match status" value="1"/>
</dbReference>
<dbReference type="FunFam" id="3.40.190.10:FF:000008">
    <property type="entry name" value="ATP phosphoribosyltransferase"/>
    <property type="match status" value="1"/>
</dbReference>
<dbReference type="FunFam" id="3.40.190.10:FF:000082">
    <property type="entry name" value="ATP phosphoribosyltransferase"/>
    <property type="match status" value="1"/>
</dbReference>
<dbReference type="Gene3D" id="3.30.70.120">
    <property type="match status" value="1"/>
</dbReference>
<dbReference type="Gene3D" id="3.40.190.10">
    <property type="entry name" value="Periplasmic binding protein-like II"/>
    <property type="match status" value="2"/>
</dbReference>
<dbReference type="HAMAP" id="MF_00079">
    <property type="entry name" value="HisG_Long"/>
    <property type="match status" value="1"/>
</dbReference>
<dbReference type="InterPro" id="IPR020621">
    <property type="entry name" value="ATP-PRT_HisG_long"/>
</dbReference>
<dbReference type="InterPro" id="IPR013820">
    <property type="entry name" value="ATP_PRibTrfase_cat"/>
</dbReference>
<dbReference type="InterPro" id="IPR018198">
    <property type="entry name" value="ATP_PRibTrfase_CS"/>
</dbReference>
<dbReference type="InterPro" id="IPR001348">
    <property type="entry name" value="ATP_PRibTrfase_HisG"/>
</dbReference>
<dbReference type="InterPro" id="IPR013115">
    <property type="entry name" value="HisG_C"/>
</dbReference>
<dbReference type="InterPro" id="IPR011322">
    <property type="entry name" value="N-reg_PII-like_a/b"/>
</dbReference>
<dbReference type="InterPro" id="IPR015867">
    <property type="entry name" value="N-reg_PII/ATP_PRibTrfase_C"/>
</dbReference>
<dbReference type="NCBIfam" id="TIGR00070">
    <property type="entry name" value="hisG"/>
    <property type="match status" value="1"/>
</dbReference>
<dbReference type="NCBIfam" id="TIGR03455">
    <property type="entry name" value="HisG_C-term"/>
    <property type="match status" value="1"/>
</dbReference>
<dbReference type="PANTHER" id="PTHR21403:SF8">
    <property type="entry name" value="ATP PHOSPHORIBOSYLTRANSFERASE"/>
    <property type="match status" value="1"/>
</dbReference>
<dbReference type="PANTHER" id="PTHR21403">
    <property type="entry name" value="ATP PHOSPHORIBOSYLTRANSFERASE ATP-PRTASE"/>
    <property type="match status" value="1"/>
</dbReference>
<dbReference type="Pfam" id="PF01634">
    <property type="entry name" value="HisG"/>
    <property type="match status" value="1"/>
</dbReference>
<dbReference type="Pfam" id="PF08029">
    <property type="entry name" value="HisG_C"/>
    <property type="match status" value="1"/>
</dbReference>
<dbReference type="SUPFAM" id="SSF54913">
    <property type="entry name" value="GlnB-like"/>
    <property type="match status" value="1"/>
</dbReference>
<dbReference type="SUPFAM" id="SSF53850">
    <property type="entry name" value="Periplasmic binding protein-like II"/>
    <property type="match status" value="1"/>
</dbReference>
<dbReference type="PROSITE" id="PS01316">
    <property type="entry name" value="ATP_P_PHORIBOSYLTR"/>
    <property type="match status" value="1"/>
</dbReference>
<sequence>MLRIAVQAKGRLFEETMALLEESDIKLSTTKRTLLVQSSNFPVEVLFLRDDDIPQSVATGVADLGIVGENEFVERQEDAEIIKRLGFSKCRLSLAMPKDIEYPGLSWFNGKKIATSYPGILDAFMKSNGVKAEVHVITGSVEVAPGIGLADAIFDIVSSGSTLVSNRLKEVEVVMRSEALLIGNKNMSKEKKEILDELLFRMDAVKTAEDKKYVLMNAPKDKLEDIIAVLPGMKSPTVMPLAQDGWCSVHTVLDEKRFWEIIGKLKALGAEGILVLPIEKMII</sequence>
<comment type="function">
    <text evidence="1">Catalyzes the condensation of ATP and 5-phosphoribose 1-diphosphate to form N'-(5'-phosphoribosyl)-ATP (PR-ATP). Has a crucial role in the pathway because the rate of histidine biosynthesis seems to be controlled primarily by regulation of HisG enzymatic activity.</text>
</comment>
<comment type="catalytic activity">
    <reaction evidence="1">
        <text>1-(5-phospho-beta-D-ribosyl)-ATP + diphosphate = 5-phospho-alpha-D-ribose 1-diphosphate + ATP</text>
        <dbReference type="Rhea" id="RHEA:18473"/>
        <dbReference type="ChEBI" id="CHEBI:30616"/>
        <dbReference type="ChEBI" id="CHEBI:33019"/>
        <dbReference type="ChEBI" id="CHEBI:58017"/>
        <dbReference type="ChEBI" id="CHEBI:73183"/>
        <dbReference type="EC" id="2.4.2.17"/>
    </reaction>
</comment>
<comment type="cofactor">
    <cofactor evidence="1">
        <name>Mg(2+)</name>
        <dbReference type="ChEBI" id="CHEBI:18420"/>
    </cofactor>
</comment>
<comment type="activity regulation">
    <text evidence="1">Feedback inhibited by histidine.</text>
</comment>
<comment type="pathway">
    <text evidence="1">Amino-acid biosynthesis; L-histidine biosynthesis; L-histidine from 5-phospho-alpha-D-ribose 1-diphosphate: step 1/9.</text>
</comment>
<comment type="subcellular location">
    <subcellularLocation>
        <location evidence="1">Cytoplasm</location>
    </subcellularLocation>
</comment>
<comment type="similarity">
    <text evidence="1">Belongs to the ATP phosphoribosyltransferase family. Long subfamily.</text>
</comment>
<name>HIS1_BACFN</name>
<accession>Q5LAZ7</accession>
<reference key="1">
    <citation type="journal article" date="2005" name="Science">
        <title>Extensive DNA inversions in the B. fragilis genome control variable gene expression.</title>
        <authorList>
            <person name="Cerdeno-Tarraga A.-M."/>
            <person name="Patrick S."/>
            <person name="Crossman L.C."/>
            <person name="Blakely G."/>
            <person name="Abratt V."/>
            <person name="Lennard N."/>
            <person name="Poxton I."/>
            <person name="Duerden B."/>
            <person name="Harris B."/>
            <person name="Quail M.A."/>
            <person name="Barron A."/>
            <person name="Clark L."/>
            <person name="Corton C."/>
            <person name="Doggett J."/>
            <person name="Holden M.T.G."/>
            <person name="Larke N."/>
            <person name="Line A."/>
            <person name="Lord A."/>
            <person name="Norbertczak H."/>
            <person name="Ormond D."/>
            <person name="Price C."/>
            <person name="Rabbinowitsch E."/>
            <person name="Woodward J."/>
            <person name="Barrell B.G."/>
            <person name="Parkhill J."/>
        </authorList>
    </citation>
    <scope>NUCLEOTIDE SEQUENCE [LARGE SCALE GENOMIC DNA]</scope>
    <source>
        <strain>ATCC 25285 / DSM 2151 / CCUG 4856 / JCM 11019 / LMG 10263 / NCTC 9343 / Onslow / VPI 2553 / EN-2</strain>
    </source>
</reference>
<gene>
    <name evidence="1" type="primary">hisG</name>
    <name type="ordered locus">BF3030</name>
</gene>